<reference key="1">
    <citation type="submission" date="2005-08" db="EMBL/GenBank/DDBJ databases">
        <title>Complete sequence of chromosome 1 of Synechococcus elongatus PCC 7942.</title>
        <authorList>
            <consortium name="US DOE Joint Genome Institute"/>
            <person name="Copeland A."/>
            <person name="Lucas S."/>
            <person name="Lapidus A."/>
            <person name="Barry K."/>
            <person name="Detter J.C."/>
            <person name="Glavina T."/>
            <person name="Hammon N."/>
            <person name="Israni S."/>
            <person name="Pitluck S."/>
            <person name="Schmutz J."/>
            <person name="Larimer F."/>
            <person name="Land M."/>
            <person name="Kyrpides N."/>
            <person name="Lykidis A."/>
            <person name="Golden S."/>
            <person name="Richardson P."/>
        </authorList>
    </citation>
    <scope>NUCLEOTIDE SEQUENCE [LARGE SCALE GENOMIC DNA]</scope>
    <source>
        <strain>ATCC 33912 / PCC 7942 / FACHB-805</strain>
    </source>
</reference>
<dbReference type="EC" id="2.1.1.182" evidence="1"/>
<dbReference type="EMBL" id="CP000100">
    <property type="protein sequence ID" value="ABB56343.1"/>
    <property type="molecule type" value="Genomic_DNA"/>
</dbReference>
<dbReference type="RefSeq" id="WP_011243514.1">
    <property type="nucleotide sequence ID" value="NZ_JACJTX010000002.1"/>
</dbReference>
<dbReference type="SMR" id="Q31RH6"/>
<dbReference type="STRING" id="1140.Synpcc7942_0311"/>
<dbReference type="PaxDb" id="1140-Synpcc7942_0311"/>
<dbReference type="GeneID" id="72429127"/>
<dbReference type="KEGG" id="syf:Synpcc7942_0311"/>
<dbReference type="eggNOG" id="COG0030">
    <property type="taxonomic scope" value="Bacteria"/>
</dbReference>
<dbReference type="HOGENOM" id="CLU_041220_0_1_3"/>
<dbReference type="OrthoDB" id="9814755at2"/>
<dbReference type="BioCyc" id="SYNEL:SYNPCC7942_0311-MONOMER"/>
<dbReference type="Proteomes" id="UP000889800">
    <property type="component" value="Chromosome"/>
</dbReference>
<dbReference type="GO" id="GO:0005829">
    <property type="term" value="C:cytosol"/>
    <property type="evidence" value="ECO:0007669"/>
    <property type="project" value="TreeGrafter"/>
</dbReference>
<dbReference type="GO" id="GO:0052908">
    <property type="term" value="F:16S rRNA (adenine(1518)-N(6)/adenine(1519)-N(6))-dimethyltransferase activity"/>
    <property type="evidence" value="ECO:0007669"/>
    <property type="project" value="UniProtKB-EC"/>
</dbReference>
<dbReference type="GO" id="GO:0003723">
    <property type="term" value="F:RNA binding"/>
    <property type="evidence" value="ECO:0007669"/>
    <property type="project" value="UniProtKB-KW"/>
</dbReference>
<dbReference type="CDD" id="cd02440">
    <property type="entry name" value="AdoMet_MTases"/>
    <property type="match status" value="1"/>
</dbReference>
<dbReference type="FunFam" id="3.40.50.150:FF:000023">
    <property type="entry name" value="Ribosomal RNA small subunit methyltransferase A"/>
    <property type="match status" value="1"/>
</dbReference>
<dbReference type="Gene3D" id="1.10.8.100">
    <property type="entry name" value="Ribosomal RNA adenine dimethylase-like, domain 2"/>
    <property type="match status" value="1"/>
</dbReference>
<dbReference type="Gene3D" id="3.40.50.150">
    <property type="entry name" value="Vaccinia Virus protein VP39"/>
    <property type="match status" value="1"/>
</dbReference>
<dbReference type="HAMAP" id="MF_00607">
    <property type="entry name" value="16SrRNA_methyltr_A"/>
    <property type="match status" value="1"/>
</dbReference>
<dbReference type="InterPro" id="IPR001737">
    <property type="entry name" value="KsgA/Erm"/>
</dbReference>
<dbReference type="InterPro" id="IPR023165">
    <property type="entry name" value="rRNA_Ade_diMease-like_C"/>
</dbReference>
<dbReference type="InterPro" id="IPR020596">
    <property type="entry name" value="rRNA_Ade_Mease_Trfase_CS"/>
</dbReference>
<dbReference type="InterPro" id="IPR020598">
    <property type="entry name" value="rRNA_Ade_methylase_Trfase_N"/>
</dbReference>
<dbReference type="InterPro" id="IPR011530">
    <property type="entry name" value="rRNA_adenine_dimethylase"/>
</dbReference>
<dbReference type="InterPro" id="IPR029063">
    <property type="entry name" value="SAM-dependent_MTases_sf"/>
</dbReference>
<dbReference type="NCBIfam" id="TIGR00755">
    <property type="entry name" value="ksgA"/>
    <property type="match status" value="1"/>
</dbReference>
<dbReference type="PANTHER" id="PTHR11727">
    <property type="entry name" value="DIMETHYLADENOSINE TRANSFERASE"/>
    <property type="match status" value="1"/>
</dbReference>
<dbReference type="PANTHER" id="PTHR11727:SF7">
    <property type="entry name" value="DIMETHYLADENOSINE TRANSFERASE-RELATED"/>
    <property type="match status" value="1"/>
</dbReference>
<dbReference type="Pfam" id="PF00398">
    <property type="entry name" value="RrnaAD"/>
    <property type="match status" value="1"/>
</dbReference>
<dbReference type="SMART" id="SM00650">
    <property type="entry name" value="rADc"/>
    <property type="match status" value="1"/>
</dbReference>
<dbReference type="SUPFAM" id="SSF53335">
    <property type="entry name" value="S-adenosyl-L-methionine-dependent methyltransferases"/>
    <property type="match status" value="1"/>
</dbReference>
<dbReference type="PROSITE" id="PS01131">
    <property type="entry name" value="RRNA_A_DIMETH"/>
    <property type="match status" value="1"/>
</dbReference>
<dbReference type="PROSITE" id="PS51689">
    <property type="entry name" value="SAM_RNA_A_N6_MT"/>
    <property type="match status" value="1"/>
</dbReference>
<feature type="chain" id="PRO_0000257365" description="Ribosomal RNA small subunit methyltransferase A">
    <location>
        <begin position="1"/>
        <end position="279"/>
    </location>
</feature>
<feature type="binding site" evidence="1">
    <location>
        <position position="10"/>
    </location>
    <ligand>
        <name>S-adenosyl-L-methionine</name>
        <dbReference type="ChEBI" id="CHEBI:59789"/>
    </ligand>
</feature>
<feature type="binding site" evidence="1">
    <location>
        <position position="12"/>
    </location>
    <ligand>
        <name>S-adenosyl-L-methionine</name>
        <dbReference type="ChEBI" id="CHEBI:59789"/>
    </ligand>
</feature>
<feature type="binding site" evidence="1">
    <location>
        <position position="37"/>
    </location>
    <ligand>
        <name>S-adenosyl-L-methionine</name>
        <dbReference type="ChEBI" id="CHEBI:59789"/>
    </ligand>
</feature>
<feature type="binding site" evidence="1">
    <location>
        <position position="58"/>
    </location>
    <ligand>
        <name>S-adenosyl-L-methionine</name>
        <dbReference type="ChEBI" id="CHEBI:59789"/>
    </ligand>
</feature>
<feature type="binding site" evidence="1">
    <location>
        <position position="83"/>
    </location>
    <ligand>
        <name>S-adenosyl-L-methionine</name>
        <dbReference type="ChEBI" id="CHEBI:59789"/>
    </ligand>
</feature>
<feature type="binding site" evidence="1">
    <location>
        <position position="108"/>
    </location>
    <ligand>
        <name>S-adenosyl-L-methionine</name>
        <dbReference type="ChEBI" id="CHEBI:59789"/>
    </ligand>
</feature>
<protein>
    <recommendedName>
        <fullName evidence="1">Ribosomal RNA small subunit methyltransferase A</fullName>
        <ecNumber evidence="1">2.1.1.182</ecNumber>
    </recommendedName>
    <alternativeName>
        <fullName evidence="1">16S rRNA (adenine(1518)-N(6)/adenine(1519)-N(6))-dimethyltransferase</fullName>
    </alternativeName>
    <alternativeName>
        <fullName evidence="1">16S rRNA dimethyladenosine transferase</fullName>
    </alternativeName>
    <alternativeName>
        <fullName evidence="1">16S rRNA dimethylase</fullName>
    </alternativeName>
    <alternativeName>
        <fullName evidence="1">S-adenosylmethionine-6-N', N'-adenosyl(rRNA) dimethyltransferase</fullName>
    </alternativeName>
</protein>
<name>RSMA_SYNE7</name>
<keyword id="KW-0963">Cytoplasm</keyword>
<keyword id="KW-0489">Methyltransferase</keyword>
<keyword id="KW-1185">Reference proteome</keyword>
<keyword id="KW-0694">RNA-binding</keyword>
<keyword id="KW-0698">rRNA processing</keyword>
<keyword id="KW-0949">S-adenosyl-L-methionine</keyword>
<keyword id="KW-0808">Transferase</keyword>
<proteinExistence type="inferred from homology"/>
<accession>Q31RH6</accession>
<gene>
    <name evidence="1" type="primary">rsmA</name>
    <name evidence="1" type="synonym">ksgA</name>
    <name type="ordered locus">Synpcc7942_0311</name>
</gene>
<organism>
    <name type="scientific">Synechococcus elongatus (strain ATCC 33912 / PCC 7942 / FACHB-805)</name>
    <name type="common">Anacystis nidulans R2</name>
    <dbReference type="NCBI Taxonomy" id="1140"/>
    <lineage>
        <taxon>Bacteria</taxon>
        <taxon>Bacillati</taxon>
        <taxon>Cyanobacteriota</taxon>
        <taxon>Cyanophyceae</taxon>
        <taxon>Synechococcales</taxon>
        <taxon>Synechococcaceae</taxon>
        <taxon>Synechococcus</taxon>
    </lineage>
</organism>
<comment type="function">
    <text evidence="1">Specifically dimethylates two adjacent adenosines (A1518 and A1519) in the loop of a conserved hairpin near the 3'-end of 16S rRNA in the 30S particle. May play a critical role in biogenesis of 30S subunits.</text>
</comment>
<comment type="catalytic activity">
    <reaction evidence="1">
        <text>adenosine(1518)/adenosine(1519) in 16S rRNA + 4 S-adenosyl-L-methionine = N(6)-dimethyladenosine(1518)/N(6)-dimethyladenosine(1519) in 16S rRNA + 4 S-adenosyl-L-homocysteine + 4 H(+)</text>
        <dbReference type="Rhea" id="RHEA:19609"/>
        <dbReference type="Rhea" id="RHEA-COMP:10232"/>
        <dbReference type="Rhea" id="RHEA-COMP:10233"/>
        <dbReference type="ChEBI" id="CHEBI:15378"/>
        <dbReference type="ChEBI" id="CHEBI:57856"/>
        <dbReference type="ChEBI" id="CHEBI:59789"/>
        <dbReference type="ChEBI" id="CHEBI:74411"/>
        <dbReference type="ChEBI" id="CHEBI:74493"/>
        <dbReference type="EC" id="2.1.1.182"/>
    </reaction>
</comment>
<comment type="subcellular location">
    <subcellularLocation>
        <location evidence="1">Cytoplasm</location>
    </subcellularLocation>
</comment>
<comment type="similarity">
    <text evidence="1">Belongs to the class I-like SAM-binding methyltransferase superfamily. rRNA adenine N(6)-methyltransferase family. RsmA subfamily.</text>
</comment>
<sequence>MPARKRFGQHWLRSEAILDRIVAAAELRPSDRVLEIGPGRGALTQRLLAAVDGLVAVELDRDLIGQLQQRFGQAENFCLLEGDILQLDWTAAIADRPRFANPSKVVANIPYNITGPILQSLLGTIAQPRRPAFERLVLLVQQEVADRLCATPGQRAYGALSVRVQYLASCERVCAVPPKSFSPPPKVQSTVICLKPRPWPQVCNNPGRLEKLLNQGFSAKRKMLRNNLKSLYSSEQIEAAFAAHQIAPEARAETLSIDQWIGLCTDLGDPTDSAINPTA</sequence>
<evidence type="ECO:0000255" key="1">
    <source>
        <dbReference type="HAMAP-Rule" id="MF_00607"/>
    </source>
</evidence>